<reference key="1">
    <citation type="journal article" date="2012" name="Nature">
        <title>The tomato genome sequence provides insights into fleshy fruit evolution.</title>
        <authorList>
            <consortium name="Tomato Genome Consortium"/>
        </authorList>
    </citation>
    <scope>NUCLEOTIDE SEQUENCE [LARGE SCALE GENOMIC DNA]</scope>
    <source>
        <strain>cv. Heinz 1706</strain>
    </source>
</reference>
<reference key="2">
    <citation type="journal article" date="2012" name="Planta">
        <title>Characterization of a flavonol 3-O-methyltransferase in the trichomes of the wild tomato species Solanum habrochaites.</title>
        <authorList>
            <person name="Schmidt A."/>
            <person name="Li C."/>
            <person name="Jones A.D."/>
            <person name="Pichersky E."/>
        </authorList>
    </citation>
    <scope>FUNCTION</scope>
    <scope>CATALYTIC ACTIVITY</scope>
    <scope>PATHWAY</scope>
    <source>
        <strain>cv. LA1777</strain>
        <tissue>Trichome gland</tissue>
    </source>
</reference>
<reference key="3">
    <citation type="journal article" date="2014" name="Plant Cell">
        <title>Analysis of natural and induced variation in tomato glandular trichome flavonoids identifies a gene not present in the reference genome.</title>
        <authorList>
            <person name="Kim J."/>
            <person name="Matsuba Y."/>
            <person name="Ning J."/>
            <person name="Schilmiller A.L."/>
            <person name="Hammar D."/>
            <person name="Jones A.D."/>
            <person name="Pichersky E."/>
            <person name="Last R.L."/>
        </authorList>
    </citation>
    <scope>GENE FAMILY</scope>
    <source>
        <strain>cv. Heinz 1706</strain>
        <strain>cv. JP117</strain>
        <strain>cv. M82</strain>
    </source>
</reference>
<reference key="4">
    <citation type="journal article" date="2019" name="Nat. Prod. Rep.">
        <title>Non-volatile natural products in plant glandular trichomes: chemistry, biological activities and biosynthesis.</title>
        <authorList>
            <person name="Liu Y."/>
            <person name="Jing S.-X."/>
            <person name="Luo S.-H."/>
            <person name="Li S.-H."/>
        </authorList>
    </citation>
    <scope>PATHWAY</scope>
    <scope>REVIEW</scope>
</reference>
<evidence type="ECO:0000250" key="1">
    <source>
        <dbReference type="UniProtKB" id="F2YTN5"/>
    </source>
</evidence>
<evidence type="ECO:0000250" key="2">
    <source>
        <dbReference type="UniProtKB" id="Q7XB10"/>
    </source>
</evidence>
<evidence type="ECO:0000255" key="3">
    <source>
        <dbReference type="PROSITE-ProRule" id="PRU01020"/>
    </source>
</evidence>
<evidence type="ECO:0000269" key="4">
    <source>
    </source>
</evidence>
<evidence type="ECO:0000303" key="5">
    <source>
    </source>
</evidence>
<evidence type="ECO:0000305" key="6"/>
<gene>
    <name evidence="5" type="primary">MOMT2</name>
    <name evidence="6" type="ordered locus">Solyc06g064500</name>
</gene>
<accession>A0A3Q7GYG2</accession>
<protein>
    <recommendedName>
        <fullName evidence="5">Myricetin 7/4'-O-methyltransferase 2</fullName>
        <shortName evidence="5">SlMOMT2a</shortName>
        <shortName evidence="5">SlMOMT2b</shortName>
        <ecNumber evidence="3 4">2.1.1.-</ecNumber>
    </recommendedName>
    <alternativeName>
        <fullName evidence="1">3',4',5'-trimethyl myricetin 7-O-methyltransferase</fullName>
        <ecNumber evidence="1 3">2.1.1.-</ecNumber>
    </alternativeName>
    <alternativeName>
        <fullName evidence="1">3',5'-dimethyl myricetin 7-O-methyltransferase</fullName>
        <shortName evidence="6">7-O-methyl syringetin synthase</shortName>
        <shortName evidence="6">Syringetin 7-O-methyltransferase</shortName>
        <ecNumber evidence="1 3">2.1.1.-</ecNumber>
    </alternativeName>
    <alternativeName>
        <fullName evidence="1">3'-methyl quercetin 4'-O-methyltransferase</fullName>
        <shortName evidence="6">4'-O-methyl isorhamnetin synthase</shortName>
        <shortName evidence="6">Isorhamnetin 4'-O-methyltransferase</shortName>
        <ecNumber evidence="1 3">2.1.1.-</ecNumber>
    </alternativeName>
    <alternativeName>
        <fullName evidence="1">3-methyl quercetin 7-O-methyltransferase</fullName>
        <ecNumber evidence="1 3">2.1.1.82</ecNumber>
    </alternativeName>
    <alternativeName>
        <fullName evidence="1">4'-methyl kaempferol 7-O-methyltransferase</fullName>
        <shortName evidence="6">7-O-methyl kaempferide synthase</shortName>
        <shortName evidence="6">Kaempferide 7-O-methyltransferase</shortName>
        <ecNumber evidence="1 3">2.1.1.-</ecNumber>
    </alternativeName>
    <alternativeName>
        <fullName evidence="1">7-methyl quercetin 4'-O-methyltransferase</fullName>
        <shortName evidence="6">Rhamnacene synthase</shortName>
        <shortName evidence="6">Rhamnetin 4'-O-methyltransferase</shortName>
        <ecNumber evidence="1 3">2.1.1.-</ecNumber>
    </alternativeName>
    <alternativeName>
        <fullName evidence="1">Kaempferol 4'-O-methyltransferase</fullName>
        <shortName evidence="6">Kaempferide synthase</shortName>
        <ecNumber evidence="1 3">2.1.1.155</ecNumber>
    </alternativeName>
    <alternativeName>
        <fullName evidence="1">Myricetin 7-O-methyltransferase</fullName>
        <ecNumber evidence="1 3">2.1.1.-</ecNumber>
    </alternativeName>
    <alternativeName>
        <fullName evidence="1">Quercetin 7-O-methyltransferase</fullName>
        <shortName evidence="6">Rhamnetin synthase</shortName>
        <ecNumber evidence="1 3">2.1.1.-</ecNumber>
    </alternativeName>
</protein>
<dbReference type="EC" id="2.1.1.-" evidence="3 4 1"/>
<dbReference type="EC" id="2.1.1.82" evidence="1 3"/>
<dbReference type="EC" id="2.1.1.155" evidence="1 3"/>
<dbReference type="SMR" id="A0A3Q7GYG2"/>
<dbReference type="PaxDb" id="4081-Solyc06g064510.2.1"/>
<dbReference type="KEGG" id="sly:101250812"/>
<dbReference type="InParanoid" id="A0A3Q7GYG2"/>
<dbReference type="OrthoDB" id="1606438at2759"/>
<dbReference type="Proteomes" id="UP000004994">
    <property type="component" value="Chromosome 6"/>
</dbReference>
<dbReference type="GO" id="GO:0008171">
    <property type="term" value="F:O-methyltransferase activity"/>
    <property type="evidence" value="ECO:0000318"/>
    <property type="project" value="GO_Central"/>
</dbReference>
<dbReference type="GO" id="GO:0046983">
    <property type="term" value="F:protein dimerization activity"/>
    <property type="evidence" value="ECO:0007669"/>
    <property type="project" value="InterPro"/>
</dbReference>
<dbReference type="GO" id="GO:0008757">
    <property type="term" value="F:S-adenosylmethionine-dependent methyltransferase activity"/>
    <property type="evidence" value="ECO:0000318"/>
    <property type="project" value="GO_Central"/>
</dbReference>
<dbReference type="GO" id="GO:0009058">
    <property type="term" value="P:biosynthetic process"/>
    <property type="evidence" value="ECO:0000318"/>
    <property type="project" value="GO_Central"/>
</dbReference>
<dbReference type="GO" id="GO:0009813">
    <property type="term" value="P:flavonoid biosynthetic process"/>
    <property type="evidence" value="ECO:0007669"/>
    <property type="project" value="UniProtKB-ARBA"/>
</dbReference>
<dbReference type="GO" id="GO:0032259">
    <property type="term" value="P:methylation"/>
    <property type="evidence" value="ECO:0000318"/>
    <property type="project" value="GO_Central"/>
</dbReference>
<dbReference type="FunFam" id="3.40.50.150:FF:000057">
    <property type="entry name" value="O-methyltransferase ZRP4"/>
    <property type="match status" value="1"/>
</dbReference>
<dbReference type="Gene3D" id="3.40.50.150">
    <property type="entry name" value="Vaccinia Virus protein VP39"/>
    <property type="match status" value="1"/>
</dbReference>
<dbReference type="Gene3D" id="1.10.10.10">
    <property type="entry name" value="Winged helix-like DNA-binding domain superfamily/Winged helix DNA-binding domain"/>
    <property type="match status" value="1"/>
</dbReference>
<dbReference type="InterPro" id="IPR016461">
    <property type="entry name" value="COMT-like"/>
</dbReference>
<dbReference type="InterPro" id="IPR001077">
    <property type="entry name" value="O_MeTrfase_dom"/>
</dbReference>
<dbReference type="InterPro" id="IPR012967">
    <property type="entry name" value="Plant_O-MeTrfase_dimerisation"/>
</dbReference>
<dbReference type="InterPro" id="IPR029063">
    <property type="entry name" value="SAM-dependent_MTases_sf"/>
</dbReference>
<dbReference type="InterPro" id="IPR036388">
    <property type="entry name" value="WH-like_DNA-bd_sf"/>
</dbReference>
<dbReference type="InterPro" id="IPR036390">
    <property type="entry name" value="WH_DNA-bd_sf"/>
</dbReference>
<dbReference type="PANTHER" id="PTHR11746">
    <property type="entry name" value="O-METHYLTRANSFERASE"/>
    <property type="match status" value="1"/>
</dbReference>
<dbReference type="Pfam" id="PF08100">
    <property type="entry name" value="Dimerisation"/>
    <property type="match status" value="1"/>
</dbReference>
<dbReference type="Pfam" id="PF00891">
    <property type="entry name" value="Methyltransf_2"/>
    <property type="match status" value="1"/>
</dbReference>
<dbReference type="PIRSF" id="PIRSF005739">
    <property type="entry name" value="O-mtase"/>
    <property type="match status" value="1"/>
</dbReference>
<dbReference type="SUPFAM" id="SSF53335">
    <property type="entry name" value="S-adenosyl-L-methionine-dependent methyltransferases"/>
    <property type="match status" value="1"/>
</dbReference>
<dbReference type="SUPFAM" id="SSF46785">
    <property type="entry name" value="Winged helix' DNA-binding domain"/>
    <property type="match status" value="1"/>
</dbReference>
<dbReference type="PROSITE" id="PS51683">
    <property type="entry name" value="SAM_OMT_II"/>
    <property type="match status" value="1"/>
</dbReference>
<comment type="function">
    <text evidence="4">Flavonoid 7/4'-O-methyltransferase involved in the biosynthesis of polymethoxylated flavonoids natural products such as myricetin derivatives, aroma compounds possessing antioxidant properties and exhibiting pharmacological activities such as anti-carcinogen, anti-viral, anti-thrombotic, anti-diabetic, anti-atherosclerotic, and anti-inflammatory effects (PubMed:22711283). Catalyzes S-adenosylmethionine-dependent regioselective 7/4'-O-methylation of flavonoids; active on various hydroxylated flavonoid substrates (PubMed:22711283).</text>
</comment>
<comment type="catalytic activity">
    <reaction evidence="1">
        <text>quercetin + S-adenosyl-L-methionine = rhamnetin + S-adenosyl-L-homocysteine + H(+)</text>
        <dbReference type="Rhea" id="RHEA:73115"/>
        <dbReference type="ChEBI" id="CHEBI:15378"/>
        <dbReference type="ChEBI" id="CHEBI:57694"/>
        <dbReference type="ChEBI" id="CHEBI:57856"/>
        <dbReference type="ChEBI" id="CHEBI:59789"/>
        <dbReference type="ChEBI" id="CHEBI:192706"/>
    </reaction>
    <physiologicalReaction direction="left-to-right" evidence="1">
        <dbReference type="Rhea" id="RHEA:73116"/>
    </physiologicalReaction>
</comment>
<comment type="catalytic activity">
    <reaction evidence="1">
        <text>kaempferol + S-adenosyl-L-methionine = kaempferide + S-adenosyl-L-homocysteine + H(+)</text>
        <dbReference type="Rhea" id="RHEA:15105"/>
        <dbReference type="ChEBI" id="CHEBI:15378"/>
        <dbReference type="ChEBI" id="CHEBI:57856"/>
        <dbReference type="ChEBI" id="CHEBI:58573"/>
        <dbReference type="ChEBI" id="CHEBI:58925"/>
        <dbReference type="ChEBI" id="CHEBI:59789"/>
        <dbReference type="EC" id="2.1.1.155"/>
    </reaction>
    <physiologicalReaction direction="left-to-right" evidence="1">
        <dbReference type="Rhea" id="RHEA:15106"/>
    </physiologicalReaction>
</comment>
<comment type="catalytic activity">
    <reaction evidence="1">
        <text>myricetin + S-adenosyl-L-methionine = 7-O-methylmyricetin + S-adenosyl-L-homocysteine + H(+)</text>
        <dbReference type="Rhea" id="RHEA:74719"/>
        <dbReference type="ChEBI" id="CHEBI:15378"/>
        <dbReference type="ChEBI" id="CHEBI:57856"/>
        <dbReference type="ChEBI" id="CHEBI:58395"/>
        <dbReference type="ChEBI" id="CHEBI:59789"/>
        <dbReference type="ChEBI" id="CHEBI:194065"/>
    </reaction>
    <physiologicalReaction direction="left-to-right" evidence="1">
        <dbReference type="Rhea" id="RHEA:74720"/>
    </physiologicalReaction>
</comment>
<comment type="catalytic activity">
    <reaction evidence="1">
        <text>kaempferide + S-adenosyl-L-methionine = 7,4'-O-dimethylkaempferol + S-adenosyl-L-homocysteine + H(+)</text>
        <dbReference type="Rhea" id="RHEA:74775"/>
        <dbReference type="ChEBI" id="CHEBI:15378"/>
        <dbReference type="ChEBI" id="CHEBI:57856"/>
        <dbReference type="ChEBI" id="CHEBI:58925"/>
        <dbReference type="ChEBI" id="CHEBI:59789"/>
        <dbReference type="ChEBI" id="CHEBI:194067"/>
    </reaction>
    <physiologicalReaction direction="left-to-right" evidence="1">
        <dbReference type="Rhea" id="RHEA:74776"/>
    </physiologicalReaction>
</comment>
<comment type="catalytic activity">
    <reaction evidence="1">
        <text>isorhamnetin + S-adenosyl-L-methionine = 3',4'-O-dimethylquercetin + S-adenosyl-L-homocysteine + 2 H(+)</text>
        <dbReference type="Rhea" id="RHEA:74723"/>
        <dbReference type="ChEBI" id="CHEBI:15378"/>
        <dbReference type="ChEBI" id="CHEBI:57856"/>
        <dbReference type="ChEBI" id="CHEBI:59789"/>
        <dbReference type="ChEBI" id="CHEBI:144055"/>
        <dbReference type="ChEBI" id="CHEBI:194064"/>
    </reaction>
    <physiologicalReaction direction="left-to-right" evidence="1">
        <dbReference type="Rhea" id="RHEA:74724"/>
    </physiologicalReaction>
</comment>
<comment type="catalytic activity">
    <reaction evidence="1">
        <text>3',4',5,7-tetrahydroxy-3-methoxyflavone + S-adenosyl-L-methionine = 3',4',5-trihydroxy-3,7-dimethoxyflavone + S-adenosyl-L-homocysteine + H(+)</text>
        <dbReference type="Rhea" id="RHEA:16181"/>
        <dbReference type="ChEBI" id="CHEBI:15378"/>
        <dbReference type="ChEBI" id="CHEBI:57856"/>
        <dbReference type="ChEBI" id="CHEBI:57928"/>
        <dbReference type="ChEBI" id="CHEBI:59789"/>
        <dbReference type="ChEBI" id="CHEBI:77710"/>
        <dbReference type="EC" id="2.1.1.82"/>
    </reaction>
    <physiologicalReaction direction="left-to-right" evidence="1">
        <dbReference type="Rhea" id="RHEA:16182"/>
    </physiologicalReaction>
</comment>
<comment type="catalytic activity">
    <reaction evidence="1">
        <text>rhamnetin + S-adenosyl-L-methionine = 7,4'-O-dimethylquercetin + S-adenosyl-L-homocysteine + H(+)</text>
        <dbReference type="Rhea" id="RHEA:74731"/>
        <dbReference type="ChEBI" id="CHEBI:15378"/>
        <dbReference type="ChEBI" id="CHEBI:57856"/>
        <dbReference type="ChEBI" id="CHEBI:59789"/>
        <dbReference type="ChEBI" id="CHEBI:192706"/>
        <dbReference type="ChEBI" id="CHEBI:194068"/>
    </reaction>
    <physiologicalReaction direction="left-to-right" evidence="1">
        <dbReference type="Rhea" id="RHEA:74732"/>
    </physiologicalReaction>
</comment>
<comment type="catalytic activity">
    <reaction evidence="1">
        <text>syringetin + S-adenosyl-L-methionine = 7,3',5'-O-trimethylmyricetin + S-adenosyl-L-homocysteine + H(+)</text>
        <dbReference type="Rhea" id="RHEA:74735"/>
        <dbReference type="ChEBI" id="CHEBI:15378"/>
        <dbReference type="ChEBI" id="CHEBI:57856"/>
        <dbReference type="ChEBI" id="CHEBI:58412"/>
        <dbReference type="ChEBI" id="CHEBI:59789"/>
        <dbReference type="ChEBI" id="CHEBI:194069"/>
    </reaction>
    <physiologicalReaction direction="left-to-right" evidence="1">
        <dbReference type="Rhea" id="RHEA:74736"/>
    </physiologicalReaction>
</comment>
<comment type="catalytic activity">
    <reaction evidence="1">
        <text>3',4',5'-O-trimethylmyricetin + S-adenosyl-L-methionine = 7,3',4',5'-O-tetramethylmyricetin + S-adenosyl-L-homocysteine</text>
        <dbReference type="Rhea" id="RHEA:74739"/>
        <dbReference type="ChEBI" id="CHEBI:57856"/>
        <dbReference type="ChEBI" id="CHEBI:59789"/>
        <dbReference type="ChEBI" id="CHEBI:194070"/>
        <dbReference type="ChEBI" id="CHEBI:194071"/>
    </reaction>
    <physiologicalReaction direction="left-to-right" evidence="1">
        <dbReference type="Rhea" id="RHEA:74740"/>
    </physiologicalReaction>
</comment>
<comment type="pathway">
    <text evidence="4">Flavonoid metabolism.</text>
</comment>
<comment type="subunit">
    <text evidence="2">Homodimer.</text>
</comment>
<comment type="similarity">
    <text evidence="3">Belongs to the class I-like SAM-binding methyltransferase superfamily. Cation-independent O-methyltransferase family.</text>
</comment>
<name>MOMT2_SOLLC</name>
<keyword id="KW-0489">Methyltransferase</keyword>
<keyword id="KW-1185">Reference proteome</keyword>
<keyword id="KW-0949">S-adenosyl-L-methionine</keyword>
<keyword id="KW-0808">Transferase</keyword>
<organism>
    <name type="scientific">Solanum lycopersicum</name>
    <name type="common">Tomato</name>
    <name type="synonym">Lycopersicon esculentum</name>
    <dbReference type="NCBI Taxonomy" id="4081"/>
    <lineage>
        <taxon>Eukaryota</taxon>
        <taxon>Viridiplantae</taxon>
        <taxon>Streptophyta</taxon>
        <taxon>Embryophyta</taxon>
        <taxon>Tracheophyta</taxon>
        <taxon>Spermatophyta</taxon>
        <taxon>Magnoliopsida</taxon>
        <taxon>eudicotyledons</taxon>
        <taxon>Gunneridae</taxon>
        <taxon>Pentapetalae</taxon>
        <taxon>asterids</taxon>
        <taxon>lamiids</taxon>
        <taxon>Solanales</taxon>
        <taxon>Solanaceae</taxon>
        <taxon>Solanoideae</taxon>
        <taxon>Solaneae</taxon>
        <taxon>Solanum</taxon>
        <taxon>Solanum subgen. Lycopersicon</taxon>
    </lineage>
</organism>
<feature type="chain" id="PRO_0000457370" description="Myricetin 7/4'-O-methyltransferase 2">
    <location>
        <begin position="1"/>
        <end position="356"/>
    </location>
</feature>
<feature type="active site" description="Proton acceptor" evidence="3">
    <location>
        <position position="260"/>
    </location>
</feature>
<feature type="binding site" evidence="3">
    <location>
        <position position="222"/>
    </location>
    <ligand>
        <name>S-adenosyl-L-methionine</name>
        <dbReference type="ChEBI" id="CHEBI:59789"/>
    </ligand>
</feature>
<proteinExistence type="evidence at protein level"/>
<sequence length="356" mass="39490">MASNNNICAYELIEAEAQSWDYILSYLRPSCIKCAIQLGIPDILHKNADPIMSLSDLIAALPNLNPSKTTFIPILMRVLVDFGLFNYHQQQGDGYSLTTVGRLLVENHHFGNRSFFLFAQHPVVLNTAASVGDWLKDDLRTAFETADGKSHWDYCGADPEFNGVFNDAMAGDSRLMSNLLISDCCAGVFEGLTSLVDIGGGTGAVAMAIAGAFPSLKCIVLDLPHVIADRKGSGNLEFVAGSMFDKIPHANAILLKWILHNWDDEDCVKLLKKCKESISSRENGGKVIIIDMIMEDNYNNKQLVQSQHLMDLIMRITYASKERTEKEWEKLFLEAGFSGYKIITSLGLRSLIEIYP</sequence>